<keyword id="KW-0963">Cytoplasm</keyword>
<keyword id="KW-0275">Fatty acid biosynthesis</keyword>
<keyword id="KW-0276">Fatty acid metabolism</keyword>
<keyword id="KW-0444">Lipid biosynthesis</keyword>
<keyword id="KW-0443">Lipid metabolism</keyword>
<keyword id="KW-0460">Magnesium</keyword>
<keyword id="KW-0479">Metal-binding</keyword>
<keyword id="KW-0808">Transferase</keyword>
<reference key="1">
    <citation type="journal article" date="2008" name="PLoS Genet.">
        <title>Complete genome sequence of the N2-fixing broad host range endophyte Klebsiella pneumoniae 342 and virulence predictions verified in mice.</title>
        <authorList>
            <person name="Fouts D.E."/>
            <person name="Tyler H.L."/>
            <person name="DeBoy R.T."/>
            <person name="Daugherty S."/>
            <person name="Ren Q."/>
            <person name="Badger J.H."/>
            <person name="Durkin A.S."/>
            <person name="Huot H."/>
            <person name="Shrivastava S."/>
            <person name="Kothari S."/>
            <person name="Dodson R.J."/>
            <person name="Mohamoud Y."/>
            <person name="Khouri H."/>
            <person name="Roesch L.F.W."/>
            <person name="Krogfelt K.A."/>
            <person name="Struve C."/>
            <person name="Triplett E.W."/>
            <person name="Methe B.A."/>
        </authorList>
    </citation>
    <scope>NUCLEOTIDE SEQUENCE [LARGE SCALE GENOMIC DNA]</scope>
    <source>
        <strain>342</strain>
    </source>
</reference>
<sequence>MAILGLGTDIVEIARIEAVIARSGDRLARRVLSDHEWSIWEQHQQPVRFLAKRFAVKEAAAKALGTGIRNGLAFNQFEVYNDELGKPKLRLWGEAKLLAERMGVRAIHVTLADERHYACATVIVES</sequence>
<protein>
    <recommendedName>
        <fullName evidence="1">Holo-[acyl-carrier-protein] synthase</fullName>
        <shortName evidence="1">Holo-ACP synthase</shortName>
        <ecNumber evidence="1">2.7.8.7</ecNumber>
    </recommendedName>
    <alternativeName>
        <fullName evidence="1">4'-phosphopantetheinyl transferase AcpS</fullName>
    </alternativeName>
</protein>
<proteinExistence type="inferred from homology"/>
<organism>
    <name type="scientific">Klebsiella pneumoniae (strain 342)</name>
    <dbReference type="NCBI Taxonomy" id="507522"/>
    <lineage>
        <taxon>Bacteria</taxon>
        <taxon>Pseudomonadati</taxon>
        <taxon>Pseudomonadota</taxon>
        <taxon>Gammaproteobacteria</taxon>
        <taxon>Enterobacterales</taxon>
        <taxon>Enterobacteriaceae</taxon>
        <taxon>Klebsiella/Raoultella group</taxon>
        <taxon>Klebsiella</taxon>
        <taxon>Klebsiella pneumoniae complex</taxon>
    </lineage>
</organism>
<gene>
    <name evidence="1" type="primary">acpS</name>
    <name type="ordered locus">KPK_1234</name>
</gene>
<name>ACPS_KLEP3</name>
<comment type="function">
    <text evidence="1">Transfers the 4'-phosphopantetheine moiety from coenzyme A to a Ser of acyl-carrier-protein.</text>
</comment>
<comment type="catalytic activity">
    <reaction evidence="1">
        <text>apo-[ACP] + CoA = holo-[ACP] + adenosine 3',5'-bisphosphate + H(+)</text>
        <dbReference type="Rhea" id="RHEA:12068"/>
        <dbReference type="Rhea" id="RHEA-COMP:9685"/>
        <dbReference type="Rhea" id="RHEA-COMP:9690"/>
        <dbReference type="ChEBI" id="CHEBI:15378"/>
        <dbReference type="ChEBI" id="CHEBI:29999"/>
        <dbReference type="ChEBI" id="CHEBI:57287"/>
        <dbReference type="ChEBI" id="CHEBI:58343"/>
        <dbReference type="ChEBI" id="CHEBI:64479"/>
        <dbReference type="EC" id="2.7.8.7"/>
    </reaction>
</comment>
<comment type="cofactor">
    <cofactor evidence="1">
        <name>Mg(2+)</name>
        <dbReference type="ChEBI" id="CHEBI:18420"/>
    </cofactor>
</comment>
<comment type="subcellular location">
    <subcellularLocation>
        <location evidence="1">Cytoplasm</location>
    </subcellularLocation>
</comment>
<comment type="similarity">
    <text evidence="1">Belongs to the P-Pant transferase superfamily. AcpS family.</text>
</comment>
<dbReference type="EC" id="2.7.8.7" evidence="1"/>
<dbReference type="EMBL" id="CP000964">
    <property type="protein sequence ID" value="ACI09603.1"/>
    <property type="molecule type" value="Genomic_DNA"/>
</dbReference>
<dbReference type="SMR" id="B5XNH4"/>
<dbReference type="KEGG" id="kpe:KPK_1234"/>
<dbReference type="HOGENOM" id="CLU_089696_3_1_6"/>
<dbReference type="Proteomes" id="UP000001734">
    <property type="component" value="Chromosome"/>
</dbReference>
<dbReference type="GO" id="GO:0005737">
    <property type="term" value="C:cytoplasm"/>
    <property type="evidence" value="ECO:0007669"/>
    <property type="project" value="UniProtKB-SubCell"/>
</dbReference>
<dbReference type="GO" id="GO:0008897">
    <property type="term" value="F:holo-[acyl-carrier-protein] synthase activity"/>
    <property type="evidence" value="ECO:0007669"/>
    <property type="project" value="UniProtKB-UniRule"/>
</dbReference>
<dbReference type="GO" id="GO:0000287">
    <property type="term" value="F:magnesium ion binding"/>
    <property type="evidence" value="ECO:0007669"/>
    <property type="project" value="UniProtKB-UniRule"/>
</dbReference>
<dbReference type="GO" id="GO:0006633">
    <property type="term" value="P:fatty acid biosynthetic process"/>
    <property type="evidence" value="ECO:0007669"/>
    <property type="project" value="UniProtKB-UniRule"/>
</dbReference>
<dbReference type="FunFam" id="3.90.470.20:FF:000001">
    <property type="entry name" value="Holo-[acyl-carrier-protein] synthase"/>
    <property type="match status" value="1"/>
</dbReference>
<dbReference type="Gene3D" id="3.90.470.20">
    <property type="entry name" value="4'-phosphopantetheinyl transferase domain"/>
    <property type="match status" value="1"/>
</dbReference>
<dbReference type="HAMAP" id="MF_00101">
    <property type="entry name" value="AcpS"/>
    <property type="match status" value="1"/>
</dbReference>
<dbReference type="InterPro" id="IPR008278">
    <property type="entry name" value="4-PPantetheinyl_Trfase_dom"/>
</dbReference>
<dbReference type="InterPro" id="IPR037143">
    <property type="entry name" value="4-PPantetheinyl_Trfase_dom_sf"/>
</dbReference>
<dbReference type="InterPro" id="IPR002582">
    <property type="entry name" value="ACPS"/>
</dbReference>
<dbReference type="InterPro" id="IPR004568">
    <property type="entry name" value="Ppantetheine-prot_Trfase_dom"/>
</dbReference>
<dbReference type="NCBIfam" id="TIGR00516">
    <property type="entry name" value="acpS"/>
    <property type="match status" value="1"/>
</dbReference>
<dbReference type="NCBIfam" id="TIGR00556">
    <property type="entry name" value="pantethn_trn"/>
    <property type="match status" value="1"/>
</dbReference>
<dbReference type="Pfam" id="PF01648">
    <property type="entry name" value="ACPS"/>
    <property type="match status" value="1"/>
</dbReference>
<dbReference type="SUPFAM" id="SSF56214">
    <property type="entry name" value="4'-phosphopantetheinyl transferase"/>
    <property type="match status" value="1"/>
</dbReference>
<accession>B5XNH4</accession>
<feature type="chain" id="PRO_1000093884" description="Holo-[acyl-carrier-protein] synthase">
    <location>
        <begin position="1"/>
        <end position="126"/>
    </location>
</feature>
<feature type="binding site" evidence="1">
    <location>
        <position position="9"/>
    </location>
    <ligand>
        <name>Mg(2+)</name>
        <dbReference type="ChEBI" id="CHEBI:18420"/>
    </ligand>
</feature>
<feature type="binding site" evidence="1">
    <location>
        <position position="58"/>
    </location>
    <ligand>
        <name>Mg(2+)</name>
        <dbReference type="ChEBI" id="CHEBI:18420"/>
    </ligand>
</feature>
<evidence type="ECO:0000255" key="1">
    <source>
        <dbReference type="HAMAP-Rule" id="MF_00101"/>
    </source>
</evidence>